<feature type="chain" id="PRO_0000062680" description="Ribulose bisphosphate carboxylase-like protein">
    <location>
        <begin position="1"/>
        <end position="434" status="greater than"/>
    </location>
</feature>
<feature type="binding site" description="via carbamate group" evidence="3">
    <location>
        <position position="198"/>
    </location>
    <ligand>
        <name>Mg(2+)</name>
        <dbReference type="ChEBI" id="CHEBI:18420"/>
    </ligand>
</feature>
<feature type="binding site" evidence="3">
    <location>
        <position position="200"/>
    </location>
    <ligand>
        <name>Mg(2+)</name>
        <dbReference type="ChEBI" id="CHEBI:18420"/>
    </ligand>
</feature>
<feature type="binding site" evidence="3">
    <location>
        <position position="201"/>
    </location>
    <ligand>
        <name>Mg(2+)</name>
        <dbReference type="ChEBI" id="CHEBI:18420"/>
    </ligand>
</feature>
<feature type="modified residue" description="N6-carboxylysine" evidence="3">
    <location>
        <position position="198"/>
    </location>
</feature>
<feature type="non-terminal residue" evidence="5">
    <location>
        <position position="434"/>
    </location>
</feature>
<proteinExistence type="inferred from homology"/>
<organism>
    <name type="scientific">Chlorobaculum thiosulfatiphilum</name>
    <name type="common">Chlorobium limicola f.sp. thiosulfatophilum</name>
    <dbReference type="NCBI Taxonomy" id="115852"/>
    <lineage>
        <taxon>Bacteria</taxon>
        <taxon>Pseudomonadati</taxon>
        <taxon>Chlorobiota</taxon>
        <taxon>Chlorobiia</taxon>
        <taxon>Chlorobiales</taxon>
        <taxon>Chlorobiaceae</taxon>
        <taxon>Chlorobaculum</taxon>
    </lineage>
</organism>
<sequence length="434" mass="48033">MNAEDVKGFFASRESLDMEQYLVRDYYLECVGDIETALAHFCSEQSTAQWKRVGVDEDFRPMHAAKVIDYDVIEELEQLSYPVKHSETGKIHACRVTIAHPHCNFGPKIPNLLTAVCGEGTYFTPGVPVVKLMDIHFPDIYLADFEGPKFGIDGLRNILNAHGRPIFFGVVKPNIGLSPEEFSEIAYQSWLGGLDIAKDDEMLADVTWSSIEERAAHLGKARRKAEAETGEPKIYLANITDEVDSLMEKHDIAVRNGANALLINALPVGLSAVRMLSNYTQVPLIGHFPFIASFSRMEKYGIRSKVMTKLQRLAGLDVVIMPGFGDRMMTPEEEVVENVIECTKPMGRIKPCLPVPGGSDSALTLGTVWRKVGSVDFGFVPGRGVFGHPMGPRAGAKSIRQAWEAIEQGISIETWAETHPELQAMIDQSALKKQ</sequence>
<comment type="function">
    <text evidence="2">May be involved in sulfur metabolism and oxidative stress response. Does not show RuBisCO activity (By similarity).</text>
</comment>
<comment type="cofactor">
    <cofactor evidence="1">
        <name>Mg(2+)</name>
        <dbReference type="ChEBI" id="CHEBI:18420"/>
    </cofactor>
    <text evidence="1">Binds 1 Mg(2+) ion per subunit.</text>
</comment>
<comment type="subunit">
    <text evidence="2">Homodimer.</text>
</comment>
<comment type="similarity">
    <text evidence="4">Belongs to the RuBisCO large chain family. Type IV subfamily.</text>
</comment>
<comment type="caution">
    <text evidence="4">Although strongly related to RuBisCO family, it lacks the conserved Lys active site in position 327, which is replaced by an Arg residue, suggesting that it may catalyze enolization but not carboxylation.</text>
</comment>
<evidence type="ECO:0000250" key="1"/>
<evidence type="ECO:0000250" key="2">
    <source>
        <dbReference type="UniProtKB" id="Q8KBL4"/>
    </source>
</evidence>
<evidence type="ECO:0000255" key="3"/>
<evidence type="ECO:0000305" key="4"/>
<evidence type="ECO:0000312" key="5">
    <source>
        <dbReference type="EMBL" id="AAK14332.1"/>
    </source>
</evidence>
<keyword id="KW-0460">Magnesium</keyword>
<keyword id="KW-0479">Metal-binding</keyword>
<reference evidence="4 5" key="1">
    <citation type="journal article" date="2001" name="Proc. Natl. Acad. Sci. U.S.A.">
        <title>A ribulose-1,5-bisphosphate carboxylase/oxygenase (RubisCO)-like protein from Chlorobium tepidum that is involved with sulfur metabolism and the response to oxidative stress.</title>
        <authorList>
            <person name="Hanson T.E."/>
            <person name="Tabita F.R."/>
        </authorList>
    </citation>
    <scope>NUCLEOTIDE SEQUENCE [GENOMIC DNA]</scope>
    <source>
        <strain>DSM 249 / 6230 / Tassajara</strain>
    </source>
</reference>
<protein>
    <recommendedName>
        <fullName>Ribulose bisphosphate carboxylase-like protein</fullName>
        <shortName>RuBisCO-like protein</shortName>
    </recommendedName>
</protein>
<dbReference type="EMBL" id="AF326322">
    <property type="protein sequence ID" value="AAK14332.1"/>
    <property type="molecule type" value="Genomic_DNA"/>
</dbReference>
<dbReference type="SMR" id="Q9AMC5"/>
<dbReference type="GO" id="GO:0000287">
    <property type="term" value="F:magnesium ion binding"/>
    <property type="evidence" value="ECO:0007669"/>
    <property type="project" value="InterPro"/>
</dbReference>
<dbReference type="GO" id="GO:0016984">
    <property type="term" value="F:ribulose-bisphosphate carboxylase activity"/>
    <property type="evidence" value="ECO:0007669"/>
    <property type="project" value="InterPro"/>
</dbReference>
<dbReference type="GO" id="GO:0015977">
    <property type="term" value="P:carbon fixation"/>
    <property type="evidence" value="ECO:0007669"/>
    <property type="project" value="InterPro"/>
</dbReference>
<dbReference type="Gene3D" id="3.20.20.110">
    <property type="entry name" value="Ribulose bisphosphate carboxylase, large subunit, C-terminal domain"/>
    <property type="match status" value="1"/>
</dbReference>
<dbReference type="Gene3D" id="3.30.70.150">
    <property type="entry name" value="RuBisCO large subunit, N-terminal domain"/>
    <property type="match status" value="1"/>
</dbReference>
<dbReference type="InterPro" id="IPR033966">
    <property type="entry name" value="RuBisCO"/>
</dbReference>
<dbReference type="InterPro" id="IPR000685">
    <property type="entry name" value="RuBisCO_lsu_C"/>
</dbReference>
<dbReference type="InterPro" id="IPR036376">
    <property type="entry name" value="RuBisCO_lsu_C_sf"/>
</dbReference>
<dbReference type="InterPro" id="IPR017443">
    <property type="entry name" value="RuBisCO_lsu_fd_N"/>
</dbReference>
<dbReference type="InterPro" id="IPR036422">
    <property type="entry name" value="RuBisCO_lsu_N_sf"/>
</dbReference>
<dbReference type="PANTHER" id="PTHR42704">
    <property type="entry name" value="RIBULOSE BISPHOSPHATE CARBOXYLASE"/>
    <property type="match status" value="1"/>
</dbReference>
<dbReference type="PANTHER" id="PTHR42704:SF17">
    <property type="entry name" value="RIBULOSE BISPHOSPHATE CARBOXYLASE LARGE CHAIN"/>
    <property type="match status" value="1"/>
</dbReference>
<dbReference type="Pfam" id="PF00016">
    <property type="entry name" value="RuBisCO_large"/>
    <property type="match status" value="1"/>
</dbReference>
<dbReference type="Pfam" id="PF02788">
    <property type="entry name" value="RuBisCO_large_N"/>
    <property type="match status" value="1"/>
</dbReference>
<dbReference type="SFLD" id="SFLDS00014">
    <property type="entry name" value="RuBisCO"/>
    <property type="match status" value="1"/>
</dbReference>
<dbReference type="SFLD" id="SFLDG00301">
    <property type="entry name" value="RuBisCO-like_proteins"/>
    <property type="match status" value="1"/>
</dbReference>
<dbReference type="SUPFAM" id="SSF51649">
    <property type="entry name" value="RuBisCo, C-terminal domain"/>
    <property type="match status" value="1"/>
</dbReference>
<dbReference type="SUPFAM" id="SSF54966">
    <property type="entry name" value="RuBisCO, large subunit, small (N-terminal) domain"/>
    <property type="match status" value="1"/>
</dbReference>
<name>RBLL_CHLTI</name>
<accession>Q9AMC5</accession>